<sequence length="287" mass="32628">MFGLLRHLFKFQFLFVVAAVLGGIYHTEIRQFLRRQTDNYLDQAGQDASIPLAFQAGDDIGTLFTPAELAKFNGEEEGRPLYLALLGSVFDVSRGIKHYGSGCSYNFFVGRDASVSFISGDFETYDPETADDVLTLKPDDLIGLAGWRDFYQKDYVYKGRVIGRFYDEKGALTTYHHKFLELLEQARDAKRQVEELRARYPGCNIEWSEERGTRVWCTTTSGDGKERSWIGYPRKLYSRGNKSFQCACVPDAELDEIDAGGKVAHGDAMLKPYDNCEPQARECFYRV</sequence>
<comment type="function">
    <text evidence="1">Heme-binding protein.</text>
</comment>
<comment type="subcellular location">
    <subcellularLocation>
        <location evidence="1">Secreted</location>
    </subcellularLocation>
</comment>
<comment type="domain">
    <text evidence="1">The cytochrome b5 heme-binding domain was proven to bind heme, although it lacks the conserved iron-binding His residues at position 99 and 126.</text>
</comment>
<comment type="similarity">
    <text evidence="3">Belongs to the cytochrome b5 family. MAPR subfamily.</text>
</comment>
<protein>
    <recommendedName>
        <fullName>Neuferricin homolog</fullName>
    </recommendedName>
    <alternativeName>
        <fullName>Cytochrome b5 domain-containing protein 2 homolog</fullName>
    </alternativeName>
</protein>
<keyword id="KW-0175">Coiled coil</keyword>
<keyword id="KW-1185">Reference proteome</keyword>
<keyword id="KW-0964">Secreted</keyword>
<keyword id="KW-0732">Signal</keyword>
<proteinExistence type="evidence at transcript level"/>
<organism>
    <name type="scientific">Drosophila melanogaster</name>
    <name type="common">Fruit fly</name>
    <dbReference type="NCBI Taxonomy" id="7227"/>
    <lineage>
        <taxon>Eukaryota</taxon>
        <taxon>Metazoa</taxon>
        <taxon>Ecdysozoa</taxon>
        <taxon>Arthropoda</taxon>
        <taxon>Hexapoda</taxon>
        <taxon>Insecta</taxon>
        <taxon>Pterygota</taxon>
        <taxon>Neoptera</taxon>
        <taxon>Endopterygota</taxon>
        <taxon>Diptera</taxon>
        <taxon>Brachycera</taxon>
        <taxon>Muscomorpha</taxon>
        <taxon>Ephydroidea</taxon>
        <taxon>Drosophilidae</taxon>
        <taxon>Drosophila</taxon>
        <taxon>Sophophora</taxon>
    </lineage>
</organism>
<gene>
    <name type="ORF">CG12056</name>
</gene>
<evidence type="ECO:0000250" key="1"/>
<evidence type="ECO:0000255" key="2"/>
<evidence type="ECO:0000305" key="3"/>
<feature type="signal peptide" evidence="2">
    <location>
        <begin position="1"/>
        <end position="22"/>
    </location>
</feature>
<feature type="chain" id="PRO_0000312328" description="Neuferricin homolog">
    <location>
        <begin position="23"/>
        <end position="287"/>
    </location>
</feature>
<feature type="domain" description="Cytochrome b5 heme-binding">
    <location>
        <begin position="61"/>
        <end position="146"/>
    </location>
</feature>
<feature type="coiled-coil region" evidence="2">
    <location>
        <begin position="175"/>
        <end position="204"/>
    </location>
</feature>
<reference key="1">
    <citation type="journal article" date="2000" name="Science">
        <title>The genome sequence of Drosophila melanogaster.</title>
        <authorList>
            <person name="Adams M.D."/>
            <person name="Celniker S.E."/>
            <person name="Holt R.A."/>
            <person name="Evans C.A."/>
            <person name="Gocayne J.D."/>
            <person name="Amanatides P.G."/>
            <person name="Scherer S.E."/>
            <person name="Li P.W."/>
            <person name="Hoskins R.A."/>
            <person name="Galle R.F."/>
            <person name="George R.A."/>
            <person name="Lewis S.E."/>
            <person name="Richards S."/>
            <person name="Ashburner M."/>
            <person name="Henderson S.N."/>
            <person name="Sutton G.G."/>
            <person name="Wortman J.R."/>
            <person name="Yandell M.D."/>
            <person name="Zhang Q."/>
            <person name="Chen L.X."/>
            <person name="Brandon R.C."/>
            <person name="Rogers Y.-H.C."/>
            <person name="Blazej R.G."/>
            <person name="Champe M."/>
            <person name="Pfeiffer B.D."/>
            <person name="Wan K.H."/>
            <person name="Doyle C."/>
            <person name="Baxter E.G."/>
            <person name="Helt G."/>
            <person name="Nelson C.R."/>
            <person name="Miklos G.L.G."/>
            <person name="Abril J.F."/>
            <person name="Agbayani A."/>
            <person name="An H.-J."/>
            <person name="Andrews-Pfannkoch C."/>
            <person name="Baldwin D."/>
            <person name="Ballew R.M."/>
            <person name="Basu A."/>
            <person name="Baxendale J."/>
            <person name="Bayraktaroglu L."/>
            <person name="Beasley E.M."/>
            <person name="Beeson K.Y."/>
            <person name="Benos P.V."/>
            <person name="Berman B.P."/>
            <person name="Bhandari D."/>
            <person name="Bolshakov S."/>
            <person name="Borkova D."/>
            <person name="Botchan M.R."/>
            <person name="Bouck J."/>
            <person name="Brokstein P."/>
            <person name="Brottier P."/>
            <person name="Burtis K.C."/>
            <person name="Busam D.A."/>
            <person name="Butler H."/>
            <person name="Cadieu E."/>
            <person name="Center A."/>
            <person name="Chandra I."/>
            <person name="Cherry J.M."/>
            <person name="Cawley S."/>
            <person name="Dahlke C."/>
            <person name="Davenport L.B."/>
            <person name="Davies P."/>
            <person name="de Pablos B."/>
            <person name="Delcher A."/>
            <person name="Deng Z."/>
            <person name="Mays A.D."/>
            <person name="Dew I."/>
            <person name="Dietz S.M."/>
            <person name="Dodson K."/>
            <person name="Doup L.E."/>
            <person name="Downes M."/>
            <person name="Dugan-Rocha S."/>
            <person name="Dunkov B.C."/>
            <person name="Dunn P."/>
            <person name="Durbin K.J."/>
            <person name="Evangelista C.C."/>
            <person name="Ferraz C."/>
            <person name="Ferriera S."/>
            <person name="Fleischmann W."/>
            <person name="Fosler C."/>
            <person name="Gabrielian A.E."/>
            <person name="Garg N.S."/>
            <person name="Gelbart W.M."/>
            <person name="Glasser K."/>
            <person name="Glodek A."/>
            <person name="Gong F."/>
            <person name="Gorrell J.H."/>
            <person name="Gu Z."/>
            <person name="Guan P."/>
            <person name="Harris M."/>
            <person name="Harris N.L."/>
            <person name="Harvey D.A."/>
            <person name="Heiman T.J."/>
            <person name="Hernandez J.R."/>
            <person name="Houck J."/>
            <person name="Hostin D."/>
            <person name="Houston K.A."/>
            <person name="Howland T.J."/>
            <person name="Wei M.-H."/>
            <person name="Ibegwam C."/>
            <person name="Jalali M."/>
            <person name="Kalush F."/>
            <person name="Karpen G.H."/>
            <person name="Ke Z."/>
            <person name="Kennison J.A."/>
            <person name="Ketchum K.A."/>
            <person name="Kimmel B.E."/>
            <person name="Kodira C.D."/>
            <person name="Kraft C.L."/>
            <person name="Kravitz S."/>
            <person name="Kulp D."/>
            <person name="Lai Z."/>
            <person name="Lasko P."/>
            <person name="Lei Y."/>
            <person name="Levitsky A.A."/>
            <person name="Li J.H."/>
            <person name="Li Z."/>
            <person name="Liang Y."/>
            <person name="Lin X."/>
            <person name="Liu X."/>
            <person name="Mattei B."/>
            <person name="McIntosh T.C."/>
            <person name="McLeod M.P."/>
            <person name="McPherson D."/>
            <person name="Merkulov G."/>
            <person name="Milshina N.V."/>
            <person name="Mobarry C."/>
            <person name="Morris J."/>
            <person name="Moshrefi A."/>
            <person name="Mount S.M."/>
            <person name="Moy M."/>
            <person name="Murphy B."/>
            <person name="Murphy L."/>
            <person name="Muzny D.M."/>
            <person name="Nelson D.L."/>
            <person name="Nelson D.R."/>
            <person name="Nelson K.A."/>
            <person name="Nixon K."/>
            <person name="Nusskern D.R."/>
            <person name="Pacleb J.M."/>
            <person name="Palazzolo M."/>
            <person name="Pittman G.S."/>
            <person name="Pan S."/>
            <person name="Pollard J."/>
            <person name="Puri V."/>
            <person name="Reese M.G."/>
            <person name="Reinert K."/>
            <person name="Remington K."/>
            <person name="Saunders R.D.C."/>
            <person name="Scheeler F."/>
            <person name="Shen H."/>
            <person name="Shue B.C."/>
            <person name="Siden-Kiamos I."/>
            <person name="Simpson M."/>
            <person name="Skupski M.P."/>
            <person name="Smith T.J."/>
            <person name="Spier E."/>
            <person name="Spradling A.C."/>
            <person name="Stapleton M."/>
            <person name="Strong R."/>
            <person name="Sun E."/>
            <person name="Svirskas R."/>
            <person name="Tector C."/>
            <person name="Turner R."/>
            <person name="Venter E."/>
            <person name="Wang A.H."/>
            <person name="Wang X."/>
            <person name="Wang Z.-Y."/>
            <person name="Wassarman D.A."/>
            <person name="Weinstock G.M."/>
            <person name="Weissenbach J."/>
            <person name="Williams S.M."/>
            <person name="Woodage T."/>
            <person name="Worley K.C."/>
            <person name="Wu D."/>
            <person name="Yang S."/>
            <person name="Yao Q.A."/>
            <person name="Ye J."/>
            <person name="Yeh R.-F."/>
            <person name="Zaveri J.S."/>
            <person name="Zhan M."/>
            <person name="Zhang G."/>
            <person name="Zhao Q."/>
            <person name="Zheng L."/>
            <person name="Zheng X.H."/>
            <person name="Zhong F.N."/>
            <person name="Zhong W."/>
            <person name="Zhou X."/>
            <person name="Zhu S.C."/>
            <person name="Zhu X."/>
            <person name="Smith H.O."/>
            <person name="Gibbs R.A."/>
            <person name="Myers E.W."/>
            <person name="Rubin G.M."/>
            <person name="Venter J.C."/>
        </authorList>
    </citation>
    <scope>NUCLEOTIDE SEQUENCE [LARGE SCALE GENOMIC DNA]</scope>
    <source>
        <strain>Berkeley</strain>
    </source>
</reference>
<reference key="2">
    <citation type="journal article" date="2002" name="Genome Biol.">
        <title>Annotation of the Drosophila melanogaster euchromatic genome: a systematic review.</title>
        <authorList>
            <person name="Misra S."/>
            <person name="Crosby M.A."/>
            <person name="Mungall C.J."/>
            <person name="Matthews B.B."/>
            <person name="Campbell K.S."/>
            <person name="Hradecky P."/>
            <person name="Huang Y."/>
            <person name="Kaminker J.S."/>
            <person name="Millburn G.H."/>
            <person name="Prochnik S.E."/>
            <person name="Smith C.D."/>
            <person name="Tupy J.L."/>
            <person name="Whitfield E.J."/>
            <person name="Bayraktaroglu L."/>
            <person name="Berman B.P."/>
            <person name="Bettencourt B.R."/>
            <person name="Celniker S.E."/>
            <person name="de Grey A.D.N.J."/>
            <person name="Drysdale R.A."/>
            <person name="Harris N.L."/>
            <person name="Richter J."/>
            <person name="Russo S."/>
            <person name="Schroeder A.J."/>
            <person name="Shu S.Q."/>
            <person name="Stapleton M."/>
            <person name="Yamada C."/>
            <person name="Ashburner M."/>
            <person name="Gelbart W.M."/>
            <person name="Rubin G.M."/>
            <person name="Lewis S.E."/>
        </authorList>
    </citation>
    <scope>GENOME REANNOTATION</scope>
    <source>
        <strain>Berkeley</strain>
    </source>
</reference>
<reference key="3">
    <citation type="journal article" date="2002" name="Genome Biol.">
        <title>A Drosophila full-length cDNA resource.</title>
        <authorList>
            <person name="Stapleton M."/>
            <person name="Carlson J.W."/>
            <person name="Brokstein P."/>
            <person name="Yu C."/>
            <person name="Champe M."/>
            <person name="George R.A."/>
            <person name="Guarin H."/>
            <person name="Kronmiller B."/>
            <person name="Pacleb J.M."/>
            <person name="Park S."/>
            <person name="Wan K.H."/>
            <person name="Rubin G.M."/>
            <person name="Celniker S.E."/>
        </authorList>
    </citation>
    <scope>NUCLEOTIDE SEQUENCE [LARGE SCALE MRNA]</scope>
    <source>
        <strain>Berkeley</strain>
        <tissue>Head</tissue>
    </source>
</reference>
<name>NEUFC_DROME</name>
<dbReference type="EMBL" id="AE014298">
    <property type="protein sequence ID" value="AAF46459.1"/>
    <property type="molecule type" value="Genomic_DNA"/>
</dbReference>
<dbReference type="EMBL" id="AY069225">
    <property type="protein sequence ID" value="AAL39370.1"/>
    <property type="molecule type" value="mRNA"/>
</dbReference>
<dbReference type="RefSeq" id="NP_572535.1">
    <property type="nucleotide sequence ID" value="NM_132307.4"/>
</dbReference>
<dbReference type="SMR" id="Q9W376"/>
<dbReference type="BioGRID" id="58308">
    <property type="interactions" value="1"/>
</dbReference>
<dbReference type="FunCoup" id="Q9W376">
    <property type="interactions" value="731"/>
</dbReference>
<dbReference type="IntAct" id="Q9W376">
    <property type="interactions" value="1"/>
</dbReference>
<dbReference type="STRING" id="7227.FBpp0071240"/>
<dbReference type="PaxDb" id="7227-FBpp0071240"/>
<dbReference type="DNASU" id="31855"/>
<dbReference type="EnsemblMetazoa" id="FBtr0071305">
    <property type="protein sequence ID" value="FBpp0071240"/>
    <property type="gene ID" value="FBgn0030099"/>
</dbReference>
<dbReference type="GeneID" id="31855"/>
<dbReference type="KEGG" id="dme:Dmel_CG12056"/>
<dbReference type="UCSC" id="CG12056-RA">
    <property type="organism name" value="d. melanogaster"/>
</dbReference>
<dbReference type="AGR" id="FB:FBgn0030099"/>
<dbReference type="FlyBase" id="FBgn0030099">
    <property type="gene designation" value="CG12056"/>
</dbReference>
<dbReference type="VEuPathDB" id="VectorBase:FBgn0030099"/>
<dbReference type="eggNOG" id="KOG1108">
    <property type="taxonomic scope" value="Eukaryota"/>
</dbReference>
<dbReference type="GeneTree" id="ENSGT00940000160156"/>
<dbReference type="HOGENOM" id="CLU_065455_0_1_1"/>
<dbReference type="InParanoid" id="Q9W376"/>
<dbReference type="OMA" id="GHKHYGP"/>
<dbReference type="OrthoDB" id="10257697at2759"/>
<dbReference type="PhylomeDB" id="Q9W376"/>
<dbReference type="BioGRID-ORCS" id="31855">
    <property type="hits" value="0 hits in 1 CRISPR screen"/>
</dbReference>
<dbReference type="GenomeRNAi" id="31855"/>
<dbReference type="PRO" id="PR:Q9W376"/>
<dbReference type="Proteomes" id="UP000000803">
    <property type="component" value="Chromosome X"/>
</dbReference>
<dbReference type="Bgee" id="FBgn0030099">
    <property type="expression patterns" value="Expressed in adult middle midgut class I enteroendocrine cell in adult midgut (Drosophila) and 71 other cell types or tissues"/>
</dbReference>
<dbReference type="GO" id="GO:0012505">
    <property type="term" value="C:endomembrane system"/>
    <property type="evidence" value="ECO:0000318"/>
    <property type="project" value="GO_Central"/>
</dbReference>
<dbReference type="GO" id="GO:0005576">
    <property type="term" value="C:extracellular region"/>
    <property type="evidence" value="ECO:0007669"/>
    <property type="project" value="UniProtKB-SubCell"/>
</dbReference>
<dbReference type="GO" id="GO:0016020">
    <property type="term" value="C:membrane"/>
    <property type="evidence" value="ECO:0000318"/>
    <property type="project" value="GO_Central"/>
</dbReference>
<dbReference type="Gene3D" id="3.10.120.10">
    <property type="entry name" value="Cytochrome b5-like heme/steroid binding domain"/>
    <property type="match status" value="1"/>
</dbReference>
<dbReference type="InterPro" id="IPR001199">
    <property type="entry name" value="Cyt_B5-like_heme/steroid-bd"/>
</dbReference>
<dbReference type="InterPro" id="IPR036400">
    <property type="entry name" value="Cyt_B5-like_heme/steroid_sf"/>
</dbReference>
<dbReference type="InterPro" id="IPR050577">
    <property type="entry name" value="MAPR/NEUFC/NENF-like"/>
</dbReference>
<dbReference type="PANTHER" id="PTHR10281">
    <property type="entry name" value="MEMBRANE-ASSOCIATED PROGESTERONE RECEPTOR COMPONENT-RELATED"/>
    <property type="match status" value="1"/>
</dbReference>
<dbReference type="PANTHER" id="PTHR10281:SF4">
    <property type="entry name" value="NEUFERRICIN"/>
    <property type="match status" value="1"/>
</dbReference>
<dbReference type="Pfam" id="PF00173">
    <property type="entry name" value="Cyt-b5"/>
    <property type="match status" value="1"/>
</dbReference>
<dbReference type="SMART" id="SM01117">
    <property type="entry name" value="Cyt-b5"/>
    <property type="match status" value="1"/>
</dbReference>
<dbReference type="SUPFAM" id="SSF55856">
    <property type="entry name" value="Cytochrome b5-like heme/steroid binding domain"/>
    <property type="match status" value="1"/>
</dbReference>
<accession>Q9W376</accession>